<organism>
    <name type="scientific">Escherichia coli (strain K12)</name>
    <dbReference type="NCBI Taxonomy" id="83333"/>
    <lineage>
        <taxon>Bacteria</taxon>
        <taxon>Pseudomonadati</taxon>
        <taxon>Pseudomonadota</taxon>
        <taxon>Gammaproteobacteria</taxon>
        <taxon>Enterobacterales</taxon>
        <taxon>Enterobacteriaceae</taxon>
        <taxon>Escherichia</taxon>
    </lineage>
</organism>
<sequence length="693" mass="76430">MKGRLLDAVPLSSLTGVGAALSNKLAKINLHTVQDLLLHLPLRYEDRTHLYPIGELLPGVYATVEGEVLNCNISFGGRRMMTCQISDGSGILTMRFFNFSAAMKNSLAAGRRVLAYGEAKRGKYGAEMIHPEYRVQGDLSTPELQETLTPVYPTTEGVKQATLRKLTDQALDLLDTCAIEELLPPELSQGMMTLPEALRTLHRPPPTLQLSDLETGQHPAQRRLILEELLAHNLSMLALRAGAQRFHAQPLSANDTLKNKLLAALPFKPTGAQARVVAEIERDMALDVPMMRLVQGDVGSGKTLVAALAALRAIAHGKQVALMAPTELLAEQHANNFRNWFAPLGIEVGWLAGKQKGKARLAQQEAIASGQVQMIVGTHAIFQEQVQFNGLALVIIDEQHRFGVHQRLALWEKGQQQGFHPHQLIMTATPIPRTLAMTAYADLDTSVIDELPPGRTPVTTVAIPDTRRTDIIDRVHHACITEGRQAYWVCTLIEESELLEAQAAEATWEELKLALPELNVGLVHGRMKPAEKQAVMASFKQGELHLLVATTVIEVGVDVPNASLMIIENPERLGLAQLHQLRGRVGRGAVASHCVLLYKTPLSKTAQIRLQVLRDSNDGFVIAQKDLEIRGPGELLGTRQTGNAEFKVADLLRDQAMIPEVQRLARHIHERYPQQAKALIERWMPETERYSNA</sequence>
<comment type="function">
    <text evidence="4 5 7 8 10 13 14 17 18 19 20 22">Plays a critical role in recombination and DNA repair (PubMed:8428576, PubMed:7957087, PubMed:8127666, PubMed:9265736, PubMed:10871364). Helps process Holliday junction (HJ) intermediates to mature products by catalyzing branch migration (PubMed:8428576, PubMed:7957087, PubMed:8127666, PubMed:10871364). Has replication fork regression activity, unwinds stalled or blocked replication forks to make a HJ that can be resolved by RuvC or RusA (PubMed:10778854, PubMed:11459957). Also rewinds unwound dsDNA in an ATP-dependent manner (PubMed:24013402). Has double-stranded (ds)DNA unwinding activity characteristic of a DNA helicase with 3'-5' polarity in vitro on linear dsDNA; branched duplex DNA (Y-DNA) substrates adopt different conformations that influence which of the two arms are unwound (PubMed:7957087). Binds and unwinds HJ and Y-DNA but not linear duplex DNA; binds no more than 10 nucleotides of ssDNA at a fork (PubMed:8428576, PubMed:7957087, PubMed:8127666, PubMed:10871364, PubMed:11459957, PubMed:15533834). Has a role in constitutive stable DNA replication (cSDR, DNA replication in the absence of protein synthesis) and R-loop (RNA annealed with dsDNA) formation (PubMed:7774596). Unwinds R-loops but not RNA:DNA hybrids (PubMed:8980680, PubMed:15533834). Is genetically synergistic to RadA and RuvABC (PubMed:12446634, PubMed:25484163).</text>
</comment>
<comment type="catalytic activity">
    <reaction evidence="18 28 29">
        <text>Couples ATP hydrolysis with the unwinding of duplex DNA by translocating in the 3'-5' direction.</text>
        <dbReference type="EC" id="5.6.2.4"/>
    </reaction>
</comment>
<comment type="catalytic activity">
    <reaction evidence="5 18 19 20">
        <text>ATP + H2O = ADP + phosphate + H(+)</text>
        <dbReference type="Rhea" id="RHEA:13065"/>
        <dbReference type="ChEBI" id="CHEBI:15377"/>
        <dbReference type="ChEBI" id="CHEBI:15378"/>
        <dbReference type="ChEBI" id="CHEBI:30616"/>
        <dbReference type="ChEBI" id="CHEBI:43474"/>
        <dbReference type="ChEBI" id="CHEBI:456216"/>
        <dbReference type="EC" id="5.6.2.4"/>
    </reaction>
</comment>
<comment type="cofactor">
    <cofactor evidence="18 20">
        <name>Mg(2+)</name>
        <dbReference type="ChEBI" id="CHEBI:18420"/>
    </cofactor>
    <text evidence="18 20">Requires Mg(2+) for branch migration of all tested DNA (PubMed:8428576, PubMed:7957087).</text>
</comment>
<comment type="subunit">
    <text evidence="5 15 19 20">Monomer in solution (PubMed:8428576, PubMed:8127666, PubMed:10871364). Probably a monomer on HJ DNA (PubMed:10871364). Binding to fork DNA is facilitated by SSB; the proteins do not seem to stably associate (PubMed:25923319).</text>
</comment>
<comment type="interaction">
    <interactant intactId="EBI-556882">
        <id>P24230</id>
    </interactant>
    <interactant intactId="EBI-542707">
        <id>P06959</id>
        <label>aceF</label>
    </interactant>
    <organismsDiffer>false</organismsDiffer>
    <experiments>2</experiments>
</comment>
<comment type="induction">
    <text evidence="9 12">The last gene in the rpoZ-spoT-trmH-recG operon (PubMed:1938888, PubMed:1544582).</text>
</comment>
<comment type="domain">
    <text evidence="1">The wedge domain within the N-terminus inserts into the replication fork junction, where the lagging and leading strand split (By similarity).</text>
</comment>
<comment type="disruption phenotype">
    <text evidence="4 8 11 14 16 22">About 10% decrease in recombination, increased sensitivity to UV light, ionizing radiation and mitomycin C; recB-recG and recG-recJ double mutants are more sensitive to UV (PubMed:1846849). In the absence of DNA damaging agents 40% of cells are longer than wild-type; after UV treatment cells are hetergeneous for cell length and about 10% are anucleate (PubMed:9265736). In the absence of ruvABC, severe loss of resistance to UV (PubMed:10778854). Very slight sensitivity to ciprofloxacin (CFX), UV and azidothymidine (AZT) in single deletion mutants, while a radA-recG deletion is extremely sensitive to CFX and AZT, less so to UV (PubMed:12446634, PubMed:25484163). The SOS response is induced in this double mutant, indicating spontaneous DNA damage. AZT sensitivity is suppressed by further recA or recF deletions, suggesting AZT-induced DNA gaps are processed into lethal intermediates in a RecA-dependent fashion mediated by RecF (PubMed:25484163). Decreased genetic instability of G-quadruplex DNA; a double recG-recQ deletion shows 10-fold increased genetic instability (PubMed:37761860).</text>
</comment>
<comment type="similarity">
    <text evidence="27">Belongs to the helicase family. RecG subfamily.</text>
</comment>
<protein>
    <recommendedName>
        <fullName evidence="26">ATP-dependent DNA helicase RecG</fullName>
        <ecNumber evidence="18">5.6.2.4</ecNumber>
    </recommendedName>
    <alternativeName>
        <fullName evidence="24">DNA branch migration protein RecG</fullName>
    </alternativeName>
    <alternativeName>
        <fullName evidence="27">Probable DNA 3'-5' helicase RecG</fullName>
    </alternativeName>
</protein>
<dbReference type="EC" id="5.6.2.4" evidence="18"/>
<dbReference type="EMBL" id="X59550">
    <property type="protein sequence ID" value="CAA42123.1"/>
    <property type="molecule type" value="Genomic_DNA"/>
</dbReference>
<dbReference type="EMBL" id="M64367">
    <property type="protein sequence ID" value="AAA24513.1"/>
    <property type="molecule type" value="Genomic_DNA"/>
</dbReference>
<dbReference type="EMBL" id="L10328">
    <property type="protein sequence ID" value="AAA62005.1"/>
    <property type="molecule type" value="Genomic_DNA"/>
</dbReference>
<dbReference type="EMBL" id="U00096">
    <property type="protein sequence ID" value="AAC76676.1"/>
    <property type="molecule type" value="Genomic_DNA"/>
</dbReference>
<dbReference type="EMBL" id="AP009048">
    <property type="protein sequence ID" value="BAE77641.1"/>
    <property type="molecule type" value="Genomic_DNA"/>
</dbReference>
<dbReference type="PIR" id="JH0265">
    <property type="entry name" value="JH0265"/>
</dbReference>
<dbReference type="RefSeq" id="NP_418109.1">
    <property type="nucleotide sequence ID" value="NC_000913.3"/>
</dbReference>
<dbReference type="RefSeq" id="WP_000678419.1">
    <property type="nucleotide sequence ID" value="NZ_LN832404.1"/>
</dbReference>
<dbReference type="SMR" id="P24230"/>
<dbReference type="BioGRID" id="4262929">
    <property type="interactions" value="175"/>
</dbReference>
<dbReference type="DIP" id="DIP-10653N"/>
<dbReference type="FunCoup" id="P24230">
    <property type="interactions" value="764"/>
</dbReference>
<dbReference type="IntAct" id="P24230">
    <property type="interactions" value="30"/>
</dbReference>
<dbReference type="STRING" id="511145.b3652"/>
<dbReference type="jPOST" id="P24230"/>
<dbReference type="PaxDb" id="511145-b3652"/>
<dbReference type="EnsemblBacteria" id="AAC76676">
    <property type="protein sequence ID" value="AAC76676"/>
    <property type="gene ID" value="b3652"/>
</dbReference>
<dbReference type="GeneID" id="948162"/>
<dbReference type="KEGG" id="ecj:JW3627"/>
<dbReference type="KEGG" id="eco:b3652"/>
<dbReference type="KEGG" id="ecoc:C3026_19785"/>
<dbReference type="PATRIC" id="fig|511145.12.peg.3772"/>
<dbReference type="EchoBASE" id="EB0822"/>
<dbReference type="eggNOG" id="COG1200">
    <property type="taxonomic scope" value="Bacteria"/>
</dbReference>
<dbReference type="HOGENOM" id="CLU_005122_7_1_6"/>
<dbReference type="InParanoid" id="P24230"/>
<dbReference type="OMA" id="DNGFQAC"/>
<dbReference type="OrthoDB" id="9804325at2"/>
<dbReference type="PhylomeDB" id="P24230"/>
<dbReference type="BioCyc" id="EcoCyc:EG10829-MONOMER"/>
<dbReference type="PRO" id="PR:P24230"/>
<dbReference type="Proteomes" id="UP000000625">
    <property type="component" value="Chromosome"/>
</dbReference>
<dbReference type="GO" id="GO:0005829">
    <property type="term" value="C:cytosol"/>
    <property type="evidence" value="ECO:0000314"/>
    <property type="project" value="EcoCyc"/>
</dbReference>
<dbReference type="GO" id="GO:0009379">
    <property type="term" value="C:Holliday junction helicase complex"/>
    <property type="evidence" value="ECO:0000314"/>
    <property type="project" value="EcoCyc"/>
</dbReference>
<dbReference type="GO" id="GO:0005524">
    <property type="term" value="F:ATP binding"/>
    <property type="evidence" value="ECO:0007669"/>
    <property type="project" value="UniProtKB-KW"/>
</dbReference>
<dbReference type="GO" id="GO:0016887">
    <property type="term" value="F:ATP hydrolysis activity"/>
    <property type="evidence" value="ECO:0007669"/>
    <property type="project" value="RHEA"/>
</dbReference>
<dbReference type="GO" id="GO:0003677">
    <property type="term" value="F:DNA binding"/>
    <property type="evidence" value="ECO:0007669"/>
    <property type="project" value="UniProtKB-KW"/>
</dbReference>
<dbReference type="GO" id="GO:0003678">
    <property type="term" value="F:DNA helicase activity"/>
    <property type="evidence" value="ECO:0000314"/>
    <property type="project" value="EcoCyc"/>
</dbReference>
<dbReference type="GO" id="GO:0006310">
    <property type="term" value="P:DNA recombination"/>
    <property type="evidence" value="ECO:0007669"/>
    <property type="project" value="UniProtKB-KW"/>
</dbReference>
<dbReference type="GO" id="GO:0006281">
    <property type="term" value="P:DNA repair"/>
    <property type="evidence" value="ECO:0000318"/>
    <property type="project" value="GO_Central"/>
</dbReference>
<dbReference type="GO" id="GO:0071932">
    <property type="term" value="P:replication fork reversal"/>
    <property type="evidence" value="ECO:0000314"/>
    <property type="project" value="UniProtKB"/>
</dbReference>
<dbReference type="GO" id="GO:0009314">
    <property type="term" value="P:response to radiation"/>
    <property type="evidence" value="ECO:0000315"/>
    <property type="project" value="EcoCyc"/>
</dbReference>
<dbReference type="CDD" id="cd17992">
    <property type="entry name" value="DEXHc_RecG"/>
    <property type="match status" value="1"/>
</dbReference>
<dbReference type="CDD" id="cd04488">
    <property type="entry name" value="RecG_wedge_OBF"/>
    <property type="match status" value="1"/>
</dbReference>
<dbReference type="CDD" id="cd18811">
    <property type="entry name" value="SF2_C_RecG"/>
    <property type="match status" value="1"/>
</dbReference>
<dbReference type="FunFam" id="2.40.50.140:FF:000134">
    <property type="entry name" value="ATP-dependent DNA helicase RecG"/>
    <property type="match status" value="1"/>
</dbReference>
<dbReference type="FunFam" id="3.40.50.300:FF:000391">
    <property type="entry name" value="ATP-dependent DNA helicase RecG"/>
    <property type="match status" value="1"/>
</dbReference>
<dbReference type="FunFam" id="3.40.50.300:FF:000715">
    <property type="entry name" value="ATP-dependent DNA helicase RecG"/>
    <property type="match status" value="1"/>
</dbReference>
<dbReference type="Gene3D" id="2.40.50.140">
    <property type="entry name" value="Nucleic acid-binding proteins"/>
    <property type="match status" value="1"/>
</dbReference>
<dbReference type="Gene3D" id="3.40.50.300">
    <property type="entry name" value="P-loop containing nucleotide triphosphate hydrolases"/>
    <property type="match status" value="2"/>
</dbReference>
<dbReference type="InterPro" id="IPR004609">
    <property type="entry name" value="ATP-dep_DNA_helicase_RecG"/>
</dbReference>
<dbReference type="InterPro" id="IPR011545">
    <property type="entry name" value="DEAD/DEAH_box_helicase_dom"/>
</dbReference>
<dbReference type="InterPro" id="IPR014001">
    <property type="entry name" value="Helicase_ATP-bd"/>
</dbReference>
<dbReference type="InterPro" id="IPR001650">
    <property type="entry name" value="Helicase_C-like"/>
</dbReference>
<dbReference type="InterPro" id="IPR012340">
    <property type="entry name" value="NA-bd_OB-fold"/>
</dbReference>
<dbReference type="InterPro" id="IPR027417">
    <property type="entry name" value="P-loop_NTPase"/>
</dbReference>
<dbReference type="InterPro" id="IPR047112">
    <property type="entry name" value="RecG/Mfd"/>
</dbReference>
<dbReference type="InterPro" id="IPR045562">
    <property type="entry name" value="RecG_dom3_C"/>
</dbReference>
<dbReference type="InterPro" id="IPR033454">
    <property type="entry name" value="RecG_wedge"/>
</dbReference>
<dbReference type="NCBIfam" id="NF008163">
    <property type="entry name" value="PRK10917.1-1"/>
    <property type="match status" value="1"/>
</dbReference>
<dbReference type="NCBIfam" id="NF008165">
    <property type="entry name" value="PRK10917.1-3"/>
    <property type="match status" value="1"/>
</dbReference>
<dbReference type="NCBIfam" id="NF008166">
    <property type="entry name" value="PRK10917.1-4"/>
    <property type="match status" value="1"/>
</dbReference>
<dbReference type="NCBIfam" id="NF008168">
    <property type="entry name" value="PRK10917.2-2"/>
    <property type="match status" value="1"/>
</dbReference>
<dbReference type="NCBIfam" id="TIGR00643">
    <property type="entry name" value="recG"/>
    <property type="match status" value="1"/>
</dbReference>
<dbReference type="PANTHER" id="PTHR47964">
    <property type="entry name" value="ATP-DEPENDENT DNA HELICASE HOMOLOG RECG, CHLOROPLASTIC"/>
    <property type="match status" value="1"/>
</dbReference>
<dbReference type="PANTHER" id="PTHR47964:SF1">
    <property type="entry name" value="ATP-DEPENDENT DNA HELICASE HOMOLOG RECG, CHLOROPLASTIC"/>
    <property type="match status" value="1"/>
</dbReference>
<dbReference type="Pfam" id="PF00270">
    <property type="entry name" value="DEAD"/>
    <property type="match status" value="1"/>
</dbReference>
<dbReference type="Pfam" id="PF00271">
    <property type="entry name" value="Helicase_C"/>
    <property type="match status" value="1"/>
</dbReference>
<dbReference type="Pfam" id="PF19833">
    <property type="entry name" value="RecG_dom3_C"/>
    <property type="match status" value="1"/>
</dbReference>
<dbReference type="Pfam" id="PF17191">
    <property type="entry name" value="RecG_wedge"/>
    <property type="match status" value="1"/>
</dbReference>
<dbReference type="SMART" id="SM00487">
    <property type="entry name" value="DEXDc"/>
    <property type="match status" value="1"/>
</dbReference>
<dbReference type="SMART" id="SM00490">
    <property type="entry name" value="HELICc"/>
    <property type="match status" value="1"/>
</dbReference>
<dbReference type="SUPFAM" id="SSF50249">
    <property type="entry name" value="Nucleic acid-binding proteins"/>
    <property type="match status" value="1"/>
</dbReference>
<dbReference type="SUPFAM" id="SSF52540">
    <property type="entry name" value="P-loop containing nucleoside triphosphate hydrolases"/>
    <property type="match status" value="2"/>
</dbReference>
<dbReference type="PROSITE" id="PS51192">
    <property type="entry name" value="HELICASE_ATP_BIND_1"/>
    <property type="match status" value="1"/>
</dbReference>
<dbReference type="PROSITE" id="PS51194">
    <property type="entry name" value="HELICASE_CTER"/>
    <property type="match status" value="1"/>
</dbReference>
<name>RECG_ECOLI</name>
<proteinExistence type="evidence at protein level"/>
<accession>P24230</accession>
<accession>P76721</accession>
<accession>Q2M7W5</accession>
<feature type="chain" id="PRO_0000102140" description="ATP-dependent DNA helicase RecG">
    <location>
        <begin position="1"/>
        <end position="693"/>
    </location>
</feature>
<feature type="domain" description="Helicase ATP-binding" evidence="2">
    <location>
        <begin position="283"/>
        <end position="448"/>
    </location>
</feature>
<feature type="domain" description="Helicase C-terminal" evidence="3">
    <location>
        <begin position="482"/>
        <end position="628"/>
    </location>
</feature>
<feature type="region of interest" description="Wedge domain" evidence="1">
    <location>
        <begin position="48"/>
        <end position="146"/>
    </location>
</feature>
<feature type="short sequence motif" description="DEAH box" evidence="2">
    <location>
        <begin position="397"/>
        <end position="400"/>
    </location>
</feature>
<feature type="binding site" evidence="2">
    <location>
        <begin position="296"/>
        <end position="303"/>
    </location>
    <ligand>
        <name>ATP</name>
        <dbReference type="ChEBI" id="CHEBI:30616"/>
    </ligand>
</feature>
<feature type="mutagenesis site" description="No longer catalyzes Holliday junction (HJ) branch migration, has no ATPase activity, still binds DNA, dominant negative to wild-type in vivo but not in vitro." evidence="5 7">
    <original>K</original>
    <variation>A</variation>
    <variation>R</variation>
    <location>
        <position position="302"/>
    </location>
</feature>
<feature type="mutagenesis site" description="In radC102; causes mild UV and X-ray sensitivity." evidence="6">
    <location>
        <begin position="411"/>
        <end position="693"/>
    </location>
</feature>
<feature type="mutagenesis site" description="In recG162; reduced ATPase activity, does not catalyze HJ branch migration, increased sensitivity to UV, still binds DNA. Does not unwind R-loops." evidence="19 21">
    <original>A</original>
    <variation>V</variation>
    <location>
        <position position="428"/>
    </location>
</feature>
<feature type="mutagenesis site" description="Does not catalyze HJ branch migration, binds DNA normally." evidence="5">
    <location>
        <begin position="662"/>
        <end position="693"/>
    </location>
</feature>
<gene>
    <name evidence="25" type="primary">recG</name>
    <name evidence="23" type="synonym">radC</name>
    <name type="synonym">spoV</name>
    <name type="ordered locus">b3652</name>
    <name type="ordered locus">JW3627</name>
</gene>
<evidence type="ECO:0000250" key="1">
    <source>
        <dbReference type="UniProtKB" id="Q9WY48"/>
    </source>
</evidence>
<evidence type="ECO:0000255" key="2">
    <source>
        <dbReference type="PROSITE-ProRule" id="PRU00541"/>
    </source>
</evidence>
<evidence type="ECO:0000255" key="3">
    <source>
        <dbReference type="PROSITE-ProRule" id="PRU00542"/>
    </source>
</evidence>
<evidence type="ECO:0000269" key="4">
    <source>
    </source>
</evidence>
<evidence type="ECO:0000269" key="5">
    <source>
    </source>
</evidence>
<evidence type="ECO:0000269" key="6">
    <source>
    </source>
</evidence>
<evidence type="ECO:0000269" key="7">
    <source>
    </source>
</evidence>
<evidence type="ECO:0000269" key="8">
    <source>
    </source>
</evidence>
<evidence type="ECO:0000269" key="9">
    <source>
    </source>
</evidence>
<evidence type="ECO:0000269" key="10">
    <source>
    </source>
</evidence>
<evidence type="ECO:0000269" key="11">
    <source>
    </source>
</evidence>
<evidence type="ECO:0000269" key="12">
    <source>
    </source>
</evidence>
<evidence type="ECO:0000269" key="13">
    <source>
    </source>
</evidence>
<evidence type="ECO:0000269" key="14">
    <source>
    </source>
</evidence>
<evidence type="ECO:0000269" key="15">
    <source>
    </source>
</evidence>
<evidence type="ECO:0000269" key="16">
    <source>
    </source>
</evidence>
<evidence type="ECO:0000269" key="17">
    <source>
    </source>
</evidence>
<evidence type="ECO:0000269" key="18">
    <source>
    </source>
</evidence>
<evidence type="ECO:0000269" key="19">
    <source>
    </source>
</evidence>
<evidence type="ECO:0000269" key="20">
    <source>
    </source>
</evidence>
<evidence type="ECO:0000269" key="21">
    <source>
    </source>
</evidence>
<evidence type="ECO:0000269" key="22">
    <source>
    </source>
</evidence>
<evidence type="ECO:0000303" key="23">
    <source>
    </source>
</evidence>
<evidence type="ECO:0000303" key="24">
    <source>
    </source>
</evidence>
<evidence type="ECO:0000303" key="25">
    <source>
    </source>
</evidence>
<evidence type="ECO:0000303" key="26">
    <source>
    </source>
</evidence>
<evidence type="ECO:0000305" key="27"/>
<evidence type="ECO:0000305" key="28">
    <source>
    </source>
</evidence>
<evidence type="ECO:0000305" key="29">
    <source>
    </source>
</evidence>
<reference key="1">
    <citation type="journal article" date="1991" name="J. Bacteriol.">
        <title>Molecular organization and nucleotide sequence of the recG locus of Escherichia coli K-12.</title>
        <authorList>
            <person name="Lloyd R.G."/>
            <person name="Sharples G.J."/>
        </authorList>
    </citation>
    <scope>NUCLEOTIDE SEQUENCE [GENOMIC DNA]</scope>
    <scope>OPERON STRUCTURE</scope>
    <source>
        <strain>K12</strain>
    </source>
</reference>
<reference key="2">
    <citation type="journal article" date="1992" name="Gene">
        <title>The nucleotide sequence of recG, the distal spo operon gene in Escherichia coli K-12.</title>
        <authorList>
            <person name="Kalman M."/>
            <person name="Murphy H."/>
            <person name="Cashel M."/>
        </authorList>
    </citation>
    <scope>NUCLEOTIDE SEQUENCE [GENOMIC DNA]</scope>
    <scope>OPERON STRUCTURE</scope>
    <source>
        <strain>K12</strain>
    </source>
</reference>
<reference key="3">
    <citation type="journal article" date="1993" name="Genomics">
        <title>DNA sequence and analysis of 136 kilobases of the Escherichia coli genome: organizational symmetry around the origin of replication.</title>
        <authorList>
            <person name="Burland V.D."/>
            <person name="Plunkett G. III"/>
            <person name="Daniels D.L."/>
            <person name="Blattner F.R."/>
        </authorList>
    </citation>
    <scope>NUCLEOTIDE SEQUENCE [LARGE SCALE GENOMIC DNA]</scope>
    <source>
        <strain>K12 / MG1655 / ATCC 47076</strain>
    </source>
</reference>
<reference key="4">
    <citation type="journal article" date="1997" name="Science">
        <title>The complete genome sequence of Escherichia coli K-12.</title>
        <authorList>
            <person name="Blattner F.R."/>
            <person name="Plunkett G. III"/>
            <person name="Bloch C.A."/>
            <person name="Perna N.T."/>
            <person name="Burland V."/>
            <person name="Riley M."/>
            <person name="Collado-Vides J."/>
            <person name="Glasner J.D."/>
            <person name="Rode C.K."/>
            <person name="Mayhew G.F."/>
            <person name="Gregor J."/>
            <person name="Davis N.W."/>
            <person name="Kirkpatrick H.A."/>
            <person name="Goeden M.A."/>
            <person name="Rose D.J."/>
            <person name="Mau B."/>
            <person name="Shao Y."/>
        </authorList>
    </citation>
    <scope>NUCLEOTIDE SEQUENCE [LARGE SCALE GENOMIC DNA]</scope>
    <source>
        <strain>K12 / MG1655 / ATCC 47076</strain>
    </source>
</reference>
<reference key="5">
    <citation type="journal article" date="2006" name="Mol. Syst. Biol.">
        <title>Highly accurate genome sequences of Escherichia coli K-12 strains MG1655 and W3110.</title>
        <authorList>
            <person name="Hayashi K."/>
            <person name="Morooka N."/>
            <person name="Yamamoto Y."/>
            <person name="Fujita K."/>
            <person name="Isono K."/>
            <person name="Choi S."/>
            <person name="Ohtsubo E."/>
            <person name="Baba T."/>
            <person name="Wanner B.L."/>
            <person name="Mori H."/>
            <person name="Horiuchi T."/>
        </authorList>
    </citation>
    <scope>NUCLEOTIDE SEQUENCE [LARGE SCALE GENOMIC DNA]</scope>
    <source>
        <strain>K12 / W3110 / ATCC 27325 / DSM 5911</strain>
    </source>
</reference>
<reference key="6">
    <citation type="journal article" date="1993" name="EMBO J.">
        <title>Dissociation of synthetic Holliday junctions by E. coli RecG protein.</title>
        <authorList>
            <person name="Lloyd R.G."/>
            <person name="Sharples G.J."/>
        </authorList>
    </citation>
    <scope>PROTEIN SEQUENCE OF 1-9</scope>
    <scope>FUNCTION AS A BRANCH MIGRATION HELICASE</scope>
    <scope>FUNCTION AS AN ATPASE</scope>
    <scope>CATALYTIC ACTIVITY</scope>
    <scope>COFACTOR</scope>
    <scope>SUBUNIT</scope>
    <scope>DNA-BINDING</scope>
</reference>
<reference key="7">
    <citation type="journal article" date="1991" name="J. Bacteriol.">
        <title>Genetic analysis of the recG locus of Escherichia coli K-12 and of its role in recombination and DNA repair.</title>
        <authorList>
            <person name="Lloyd R.G."/>
            <person name="Buckman C."/>
        </authorList>
    </citation>
    <scope>DISRUPTION PHENOTYPE</scope>
    <source>
        <strain>K12</strain>
    </source>
</reference>
<reference key="8">
    <citation type="journal article" date="1994" name="EMBO J.">
        <title>Branch migration of Holliday junctions: identification of RecG protein as a junction specific DNA helicase.</title>
        <authorList>
            <person name="Whitby M.C."/>
            <person name="Vincent S.D."/>
            <person name="Lloyd R.G."/>
        </authorList>
    </citation>
    <scope>FUNCTION AS A BRANCH MIGRATION HELICASE</scope>
    <scope>FUNCTION AS AN ATPASE</scope>
    <scope>CATALYTIC ACTIVITY</scope>
    <scope>COFACTOR</scope>
    <scope>DNA-BINDING</scope>
</reference>
<reference key="9">
    <citation type="journal article" date="1994" name="Nucleic Acids Res.">
        <title>A mutation in helicase motif III of E. coli RecG protein abolishes branch migration of Holliday junctions.</title>
        <authorList>
            <person name="Sharples G.J."/>
            <person name="Whitby M.C."/>
            <person name="Ryder L."/>
            <person name="Lloyd R.G."/>
        </authorList>
    </citation>
    <scope>FUNCTION AS A BRANCH MIGRATION HELICASE</scope>
    <scope>FUNCTION AS AN ATPASE</scope>
    <scope>SUBUNIT</scope>
    <scope>DNA-BINDING</scope>
    <scope>MUTAGENESIS OF ALA-428</scope>
</reference>
<reference key="10">
    <citation type="journal article" date="1995" name="EMBO J.">
        <title>Escherichia coli RecG and RecA proteins in R-loop formation.</title>
        <authorList>
            <person name="Hong X."/>
            <person name="Cadwell G.W."/>
            <person name="Kogoma T."/>
        </authorList>
    </citation>
    <scope>FUNCTION</scope>
</reference>
<reference key="11">
    <citation type="journal article" date="1996" name="J. Mol. Biol.">
        <title>The RecG branch migration protein of Escherichia coli dissociates R-loops.</title>
        <authorList>
            <person name="Vincent S.D."/>
            <person name="Mahdi A.A."/>
            <person name="Lloyd R.G."/>
        </authorList>
    </citation>
    <scope>UNWINDS R-LOOPS</scope>
    <scope>MUTAGENESIS OF ALA-428</scope>
</reference>
<reference key="12">
    <citation type="journal article" date="1997" name="Genes Genet. Syst.">
        <title>Roles of the recG gene product of Escherichia coli in recombination repair: effects of the delta recG mutation on cell division and chromosome partition.</title>
        <authorList>
            <person name="Ishioka K."/>
            <person name="Iwasaki H."/>
            <person name="Shinagawa H."/>
        </authorList>
    </citation>
    <scope>FUNCTION</scope>
    <scope>DISRUPTION PHENOTYPE</scope>
</reference>
<reference key="13">
    <citation type="journal article" date="2000" name="Cell">
        <title>Modulation of RNA polymerase by (p)ppGpp reveals a RecG-dependent mechanism for replication fork progression.</title>
        <authorList>
            <person name="McGlynn P."/>
            <person name="Lloyd R.G."/>
        </authorList>
    </citation>
    <scope>FUNCTION IN REPLICATION FORK REGRESSION</scope>
    <scope>DISRUPTION PHENOTYPE</scope>
    <source>
        <strain>K12</strain>
    </source>
</reference>
<reference key="14">
    <citation type="journal article" date="2000" name="Nucleic Acids Res.">
        <title>Characterisation of the catalytically active form of RecG helicase.</title>
        <authorList>
            <person name="McGlynn P."/>
            <person name="Mahdi A.A."/>
            <person name="Lloyd R.G."/>
        </authorList>
    </citation>
    <scope>FUNCTION AS A BRANCH MIGRATION HELICASE</scope>
    <scope>SUBUNIT</scope>
    <scope>DNA-BINDING</scope>
    <scope>MUTAGENESIS OF LYS-302 AND 662-GLN--ALA-693</scope>
</reference>
<reference key="15">
    <citation type="journal article" date="2001" name="Proc. Natl. Acad. Sci. U.S.A.">
        <title>Rescue of stalled replication forks by RecG: simultaneous translocation on the leading and lagging strand templates supports an active DNA unwinding model of fork reversal and Holliday junction formation.</title>
        <authorList>
            <person name="McGlynn P."/>
            <person name="Lloyd R.G."/>
        </authorList>
    </citation>
    <scope>FUNCTION IN REPLICATION FORK REGRESSION</scope>
    <scope>MUTAGENESIS OF LYS-302</scope>
    <scope>DNA-BINDING</scope>
</reference>
<reference key="16">
    <citation type="journal article" date="2000" name="J. Bacteriol.">
        <title>radC102 of Escherichia coli is an allele of recG.</title>
        <authorList>
            <person name="Lombardo M.J."/>
            <person name="Rosenberg S.M."/>
        </authorList>
    </citation>
    <scope>MUTAGENESIS OF 411-TRP--ALA-693</scope>
</reference>
<reference key="17">
    <citation type="journal article" date="2002" name="J. Bacteriol.">
        <title>Role for radA/sms in recombination intermediate processing in Escherichia coli.</title>
        <authorList>
            <person name="Beam C.E."/>
            <person name="Saveson C.J."/>
            <person name="Lovett S.T."/>
        </authorList>
    </citation>
    <scope>FUNCTION</scope>
    <scope>DISRUPTION PHENOTYPE</scope>
    <source>
        <strain>K12 / AB1157</strain>
    </source>
</reference>
<reference key="18">
    <citation type="journal article" date="2005" name="DNA Repair">
        <title>Conservation of RecG activity from pathogens to hyperthermophiles.</title>
        <authorList>
            <person name="Wen Q."/>
            <person name="Mahdi A.A."/>
            <person name="Briggs G.S."/>
            <person name="Sharples G.J."/>
            <person name="Lloyd R.G."/>
        </authorList>
    </citation>
    <scope>FUNCTION</scope>
    <scope>DNA-BINDING</scope>
</reference>
<reference key="19">
    <citation type="journal article" date="2013" name="Nat. Commun.">
        <title>RecG and UvsW catalyse robust DNA rewinding critical for stalled DNA replication fork rescue.</title>
        <authorList>
            <person name="Manosas M."/>
            <person name="Perumal S.K."/>
            <person name="Bianco P."/>
            <person name="Ritort F."/>
            <person name="Benkovic S.J."/>
            <person name="Croquette V."/>
        </authorList>
    </citation>
    <scope>WINDS AND UNWINDS DNA</scope>
</reference>
<reference key="20">
    <citation type="journal article" date="2015" name="Sci. Rep.">
        <title>Remodeling of RecG Helicase at the DNA Replication Fork by SSB Protein.</title>
        <authorList>
            <person name="Sun Z."/>
            <person name="Tan H.Y."/>
            <person name="Bianco P.R."/>
            <person name="Lyubchenko Y.L."/>
        </authorList>
    </citation>
    <scope>INTERACTION WITH SSB</scope>
</reference>
<reference key="21">
    <citation type="journal article" date="2015" name="Mol. Microbiol.">
        <title>Genetic analysis of Escherichia coli RadA: functional motifs and genetic interactions.</title>
        <authorList>
            <person name="Cooper D.L."/>
            <person name="Boyle D.C."/>
            <person name="Lovett S.T."/>
        </authorList>
    </citation>
    <scope>FUNCTION</scope>
    <scope>DISRUPTION PHENOTYPE</scope>
    <source>
        <strain>K12 / AB1157</strain>
    </source>
</reference>
<reference key="22">
    <citation type="journal article" date="2023" name="Genes (Basel)">
        <title>Genomic Instability of G-Quadruplex Sequences in Escherichia coli: Roles of DinG, RecG, and RecQ Helicases.</title>
        <authorList>
            <person name="Parekh V.J."/>
            <person name="Wegrzyn G."/>
            <person name="Arluison V."/>
            <person name="Sinden R.R."/>
        </authorList>
    </citation>
    <scope>DISRUPTION PHENOTYPE</scope>
    <source>
        <strain>K12 / AB1157</strain>
    </source>
</reference>
<keyword id="KW-0067">ATP-binding</keyword>
<keyword id="KW-0903">Direct protein sequencing</keyword>
<keyword id="KW-0227">DNA damage</keyword>
<keyword id="KW-0233">DNA recombination</keyword>
<keyword id="KW-0234">DNA repair</keyword>
<keyword id="KW-0238">DNA-binding</keyword>
<keyword id="KW-0347">Helicase</keyword>
<keyword id="KW-0378">Hydrolase</keyword>
<keyword id="KW-0413">Isomerase</keyword>
<keyword id="KW-0547">Nucleotide-binding</keyword>
<keyword id="KW-1185">Reference proteome</keyword>